<feature type="chain" id="PRO_0000354962" description="Catalase-peroxidase">
    <location>
        <begin position="1"/>
        <end position="757"/>
    </location>
</feature>
<feature type="region of interest" description="Disordered" evidence="2">
    <location>
        <begin position="213"/>
        <end position="232"/>
    </location>
</feature>
<feature type="active site" description="Proton acceptor" evidence="1">
    <location>
        <position position="102"/>
    </location>
</feature>
<feature type="binding site" description="axial binding residue" evidence="1">
    <location>
        <position position="289"/>
    </location>
    <ligand>
        <name>heme b</name>
        <dbReference type="ChEBI" id="CHEBI:60344"/>
    </ligand>
    <ligandPart>
        <name>Fe</name>
        <dbReference type="ChEBI" id="CHEBI:18248"/>
    </ligandPart>
</feature>
<feature type="site" description="Transition state stabilizer" evidence="1">
    <location>
        <position position="98"/>
    </location>
</feature>
<feature type="cross-link" description="Tryptophyl-tyrosyl-methioninium (Trp-Tyr) (with M-274)" evidence="1">
    <location>
        <begin position="101"/>
        <end position="248"/>
    </location>
</feature>
<feature type="cross-link" description="Tryptophyl-tyrosyl-methioninium (Tyr-Met) (with W-101)" evidence="1">
    <location>
        <begin position="248"/>
        <end position="274"/>
    </location>
</feature>
<proteinExistence type="inferred from homology"/>
<gene>
    <name evidence="1" type="primary">katG</name>
    <name type="ordered locus">PD_1278</name>
</gene>
<evidence type="ECO:0000255" key="1">
    <source>
        <dbReference type="HAMAP-Rule" id="MF_01961"/>
    </source>
</evidence>
<evidence type="ECO:0000256" key="2">
    <source>
        <dbReference type="SAM" id="MobiDB-lite"/>
    </source>
</evidence>
<accession>Q87C18</accession>
<protein>
    <recommendedName>
        <fullName evidence="1">Catalase-peroxidase</fullName>
        <shortName evidence="1">CP</shortName>
        <ecNumber evidence="1">1.11.1.21</ecNumber>
    </recommendedName>
    <alternativeName>
        <fullName evidence="1">Peroxidase/catalase</fullName>
    </alternativeName>
</protein>
<name>KATG_XYLFT</name>
<dbReference type="EC" id="1.11.1.21" evidence="1"/>
<dbReference type="EMBL" id="AE009442">
    <property type="protein sequence ID" value="AAO29127.1"/>
    <property type="molecule type" value="Genomic_DNA"/>
</dbReference>
<dbReference type="SMR" id="Q87C18"/>
<dbReference type="PeroxiBase" id="2321">
    <property type="entry name" value="XfCP01_Temecula1"/>
</dbReference>
<dbReference type="KEGG" id="xft:PD_1278"/>
<dbReference type="HOGENOM" id="CLU_025424_2_0_6"/>
<dbReference type="Proteomes" id="UP000002516">
    <property type="component" value="Chromosome"/>
</dbReference>
<dbReference type="GO" id="GO:0005829">
    <property type="term" value="C:cytosol"/>
    <property type="evidence" value="ECO:0007669"/>
    <property type="project" value="TreeGrafter"/>
</dbReference>
<dbReference type="GO" id="GO:0004096">
    <property type="term" value="F:catalase activity"/>
    <property type="evidence" value="ECO:0007669"/>
    <property type="project" value="UniProtKB-UniRule"/>
</dbReference>
<dbReference type="GO" id="GO:0020037">
    <property type="term" value="F:heme binding"/>
    <property type="evidence" value="ECO:0007669"/>
    <property type="project" value="InterPro"/>
</dbReference>
<dbReference type="GO" id="GO:0046872">
    <property type="term" value="F:metal ion binding"/>
    <property type="evidence" value="ECO:0007669"/>
    <property type="project" value="UniProtKB-KW"/>
</dbReference>
<dbReference type="GO" id="GO:0070301">
    <property type="term" value="P:cellular response to hydrogen peroxide"/>
    <property type="evidence" value="ECO:0007669"/>
    <property type="project" value="TreeGrafter"/>
</dbReference>
<dbReference type="GO" id="GO:0042744">
    <property type="term" value="P:hydrogen peroxide catabolic process"/>
    <property type="evidence" value="ECO:0007669"/>
    <property type="project" value="UniProtKB-KW"/>
</dbReference>
<dbReference type="CDD" id="cd00649">
    <property type="entry name" value="catalase_peroxidase_1"/>
    <property type="match status" value="1"/>
</dbReference>
<dbReference type="CDD" id="cd08200">
    <property type="entry name" value="catalase_peroxidase_2"/>
    <property type="match status" value="1"/>
</dbReference>
<dbReference type="FunFam" id="1.10.420.10:FF:000002">
    <property type="entry name" value="Catalase-peroxidase"/>
    <property type="match status" value="1"/>
</dbReference>
<dbReference type="FunFam" id="1.10.420.10:FF:000004">
    <property type="entry name" value="Catalase-peroxidase"/>
    <property type="match status" value="1"/>
</dbReference>
<dbReference type="FunFam" id="1.10.520.10:FF:000002">
    <property type="entry name" value="Catalase-peroxidase"/>
    <property type="match status" value="1"/>
</dbReference>
<dbReference type="Gene3D" id="1.10.520.10">
    <property type="match status" value="2"/>
</dbReference>
<dbReference type="Gene3D" id="1.10.420.10">
    <property type="entry name" value="Peroxidase, domain 2"/>
    <property type="match status" value="2"/>
</dbReference>
<dbReference type="HAMAP" id="MF_01961">
    <property type="entry name" value="Catal_peroxid"/>
    <property type="match status" value="1"/>
</dbReference>
<dbReference type="InterPro" id="IPR000763">
    <property type="entry name" value="Catalase_peroxidase"/>
</dbReference>
<dbReference type="InterPro" id="IPR002016">
    <property type="entry name" value="Haem_peroxidase"/>
</dbReference>
<dbReference type="InterPro" id="IPR010255">
    <property type="entry name" value="Haem_peroxidase_sf"/>
</dbReference>
<dbReference type="InterPro" id="IPR019794">
    <property type="entry name" value="Peroxidases_AS"/>
</dbReference>
<dbReference type="InterPro" id="IPR019793">
    <property type="entry name" value="Peroxidases_heam-ligand_BS"/>
</dbReference>
<dbReference type="NCBIfam" id="TIGR00198">
    <property type="entry name" value="cat_per_HPI"/>
    <property type="match status" value="1"/>
</dbReference>
<dbReference type="NCBIfam" id="NF011635">
    <property type="entry name" value="PRK15061.1"/>
    <property type="match status" value="1"/>
</dbReference>
<dbReference type="PANTHER" id="PTHR30555:SF0">
    <property type="entry name" value="CATALASE-PEROXIDASE"/>
    <property type="match status" value="1"/>
</dbReference>
<dbReference type="PANTHER" id="PTHR30555">
    <property type="entry name" value="HYDROPEROXIDASE I, BIFUNCTIONAL CATALASE-PEROXIDASE"/>
    <property type="match status" value="1"/>
</dbReference>
<dbReference type="Pfam" id="PF00141">
    <property type="entry name" value="peroxidase"/>
    <property type="match status" value="2"/>
</dbReference>
<dbReference type="PRINTS" id="PR00460">
    <property type="entry name" value="BPEROXIDASE"/>
</dbReference>
<dbReference type="PRINTS" id="PR00458">
    <property type="entry name" value="PEROXIDASE"/>
</dbReference>
<dbReference type="SUPFAM" id="SSF48113">
    <property type="entry name" value="Heme-dependent peroxidases"/>
    <property type="match status" value="2"/>
</dbReference>
<dbReference type="PROSITE" id="PS00435">
    <property type="entry name" value="PEROXIDASE_1"/>
    <property type="match status" value="1"/>
</dbReference>
<dbReference type="PROSITE" id="PS00436">
    <property type="entry name" value="PEROXIDASE_2"/>
    <property type="match status" value="1"/>
</dbReference>
<dbReference type="PROSITE" id="PS50873">
    <property type="entry name" value="PEROXIDASE_4"/>
    <property type="match status" value="1"/>
</dbReference>
<comment type="function">
    <text evidence="1">Bifunctional enzyme with both catalase and broad-spectrum peroxidase activity.</text>
</comment>
<comment type="catalytic activity">
    <reaction evidence="1">
        <text>H2O2 + AH2 = A + 2 H2O</text>
        <dbReference type="Rhea" id="RHEA:30275"/>
        <dbReference type="ChEBI" id="CHEBI:13193"/>
        <dbReference type="ChEBI" id="CHEBI:15377"/>
        <dbReference type="ChEBI" id="CHEBI:16240"/>
        <dbReference type="ChEBI" id="CHEBI:17499"/>
        <dbReference type="EC" id="1.11.1.21"/>
    </reaction>
</comment>
<comment type="catalytic activity">
    <reaction evidence="1">
        <text>2 H2O2 = O2 + 2 H2O</text>
        <dbReference type="Rhea" id="RHEA:20309"/>
        <dbReference type="ChEBI" id="CHEBI:15377"/>
        <dbReference type="ChEBI" id="CHEBI:15379"/>
        <dbReference type="ChEBI" id="CHEBI:16240"/>
        <dbReference type="EC" id="1.11.1.21"/>
    </reaction>
</comment>
<comment type="cofactor">
    <cofactor evidence="1">
        <name>heme b</name>
        <dbReference type="ChEBI" id="CHEBI:60344"/>
    </cofactor>
    <text evidence="1">Binds 1 heme b (iron(II)-protoporphyrin IX) group per dimer.</text>
</comment>
<comment type="subunit">
    <text evidence="1">Homodimer or homotetramer.</text>
</comment>
<comment type="PTM">
    <text evidence="1">Formation of the three residue Trp-Tyr-Met cross-link is important for the catalase, but not the peroxidase activity of the enzyme.</text>
</comment>
<comment type="similarity">
    <text evidence="1">Belongs to the peroxidase family. Peroxidase/catalase subfamily.</text>
</comment>
<reference key="1">
    <citation type="journal article" date="2003" name="J. Bacteriol.">
        <title>Comparative analyses of the complete genome sequences of Pierce's disease and citrus variegated chlorosis strains of Xylella fastidiosa.</title>
        <authorList>
            <person name="Van Sluys M.A."/>
            <person name="de Oliveira M.C."/>
            <person name="Monteiro-Vitorello C.B."/>
            <person name="Miyaki C.Y."/>
            <person name="Furlan L.R."/>
            <person name="Camargo L.E.A."/>
            <person name="da Silva A.C.R."/>
            <person name="Moon D.H."/>
            <person name="Takita M.A."/>
            <person name="Lemos E.G.M."/>
            <person name="Machado M.A."/>
            <person name="Ferro M.I.T."/>
            <person name="da Silva F.R."/>
            <person name="Goldman M.H.S."/>
            <person name="Goldman G.H."/>
            <person name="Lemos M.V.F."/>
            <person name="El-Dorry H."/>
            <person name="Tsai S.M."/>
            <person name="Carrer H."/>
            <person name="Carraro D.M."/>
            <person name="de Oliveira R.C."/>
            <person name="Nunes L.R."/>
            <person name="Siqueira W.J."/>
            <person name="Coutinho L.L."/>
            <person name="Kimura E.T."/>
            <person name="Ferro E.S."/>
            <person name="Harakava R."/>
            <person name="Kuramae E.E."/>
            <person name="Marino C.L."/>
            <person name="Giglioti E."/>
            <person name="Abreu I.L."/>
            <person name="Alves L.M.C."/>
            <person name="do Amaral A.M."/>
            <person name="Baia G.S."/>
            <person name="Blanco S.R."/>
            <person name="Brito M.S."/>
            <person name="Cannavan F.S."/>
            <person name="Celestino A.V."/>
            <person name="da Cunha A.F."/>
            <person name="Fenille R.C."/>
            <person name="Ferro J.A."/>
            <person name="Formighieri E.F."/>
            <person name="Kishi L.T."/>
            <person name="Leoni S.G."/>
            <person name="Oliveira A.R."/>
            <person name="Rosa V.E. Jr."/>
            <person name="Sassaki F.T."/>
            <person name="Sena J.A.D."/>
            <person name="de Souza A.A."/>
            <person name="Truffi D."/>
            <person name="Tsukumo F."/>
            <person name="Yanai G.M."/>
            <person name="Zaros L.G."/>
            <person name="Civerolo E.L."/>
            <person name="Simpson A.J.G."/>
            <person name="Almeida N.F. Jr."/>
            <person name="Setubal J.C."/>
            <person name="Kitajima J.P."/>
        </authorList>
    </citation>
    <scope>NUCLEOTIDE SEQUENCE [LARGE SCALE GENOMIC DNA]</scope>
    <source>
        <strain>Temecula1 / ATCC 700964</strain>
    </source>
</reference>
<keyword id="KW-0349">Heme</keyword>
<keyword id="KW-0376">Hydrogen peroxide</keyword>
<keyword id="KW-0408">Iron</keyword>
<keyword id="KW-0479">Metal-binding</keyword>
<keyword id="KW-0560">Oxidoreductase</keyword>
<keyword id="KW-0575">Peroxidase</keyword>
<keyword id="KW-1185">Reference proteome</keyword>
<sequence length="757" mass="83661">MRDMRASSPETTSAVKCPFNKTAVEGTHNKDWWPNQLRVDLLHQHSNKSNPLGETFDYAKEFQKLDYAALKRDLHALMTDSQDWWPADFGHYGGLFIRMAWHSAGTYRIGDGRGGAGRGQQRFAPLNSWPDNVSLDKARRLLWPIKKKYGQQISWADLIVLAGNVALESMGFKTFGFAGGRVDTWEPDQDVYWGREMTWLGGDVRYGAVSEGVHHPDEHRGAKEKASKNSDSRVLENPLAAVQMGLIYVNPEGPDGCPDPLASARDIRETFARMAMNDEETVALIAGGHTFGKTHGAAPADNVGPEPEAGELEQQGLGWHNRFGSGKAGDTITSGLEVTWTKTPTQWSNDFFEHLFGYEWELTKSPAGAYQWVAKDAAATIPHAHDPSKKLLPMMLTSDLALRFDPVYEKISRHFHAHPDQFADAFARAWFKLTHRDMGPRVRYLGPEVPAEELIWQDPVPKVSHVLVDAQDLLALKHKISASGLGISQLVSTAWASASTFRGSDKRGGANGGRLCLAPQSQWEVNQPQQLSVVLETLRRVQAEFNAQAGDKRISLADLIVLAGGVGVEQAAKRAGIVLEVPFVPGRTDALQEQTDVSSFAPLEPFADGFRNYVKEGCVVPSEHLLIDRAQLLTLTAPEMTVLIGGLRVLGANVGGVKHGVFTDRLGTLSNDFFINLLDMGTEWAPVSKERHLFEGRDRRTGALKWTGTRVDLVFGSNSLLRALAEVYAAVDAQEKFVRDFVAAWSKVMHLDRFDLV</sequence>
<organism>
    <name type="scientific">Xylella fastidiosa (strain Temecula1 / ATCC 700964)</name>
    <dbReference type="NCBI Taxonomy" id="183190"/>
    <lineage>
        <taxon>Bacteria</taxon>
        <taxon>Pseudomonadati</taxon>
        <taxon>Pseudomonadota</taxon>
        <taxon>Gammaproteobacteria</taxon>
        <taxon>Lysobacterales</taxon>
        <taxon>Lysobacteraceae</taxon>
        <taxon>Xylella</taxon>
    </lineage>
</organism>